<proteinExistence type="evidence at protein level"/>
<sequence length="552" mass="61823">MDKLNKLAVPAGEKFRKLQKMVHDIKKNESGIINKFKKFQNEQVALICKTGKDTWDRLKKKPPPSLPRRDYASEHADNEEEQWSDDFDSDYENPDGHSDSEMYVVPSEENPDDSYEPPPSEQEKKKIPSSFPISRGEYADNRTSHHQLPPINKPLPSTPSSALPRPKKPSLPSPAAKPKLPLKPRECSDDEDNYIVPVDNDDDNYIEPTESSTPPPAKPPVNRFMKPPAKSALPTPPKPSLASDMQEVYEVPEEEEELSPPPVTRFTKPLPATRAQNAEHSHMHSMTRESPKLDASRNILPLPRNRLHPKTDHEANNNDENHSFSNTQESKFPPGAAPSPLPRALKKTSNAVNPAKPCLPSRDTFTVNEDKPTAADRRRGSSHEFPLPPLPSGTPKSSLQKPLVLPKVPEAPSRALGTSPHSSISSISSTADQDAGVHSKAWYAATCDRKTAEDALYRSNKDGSFLIRKSSGQDSRQPYTLVVFYNRRVYNIPIRFIESTRQYALGREKCGEERFDSVAEIVENHQHTSLVLIDSQNNTKDSTKLKYIVRVS</sequence>
<gene>
    <name type="primary">BLNK</name>
    <name type="synonym">BASH</name>
</gene>
<dbReference type="EMBL" id="AB015289">
    <property type="protein sequence ID" value="BAA36275.1"/>
    <property type="molecule type" value="mRNA"/>
</dbReference>
<dbReference type="EMBL" id="AF089727">
    <property type="protein sequence ID" value="AAD12783.1"/>
    <property type="molecule type" value="mRNA"/>
</dbReference>
<dbReference type="RefSeq" id="NP_990239.1">
    <molecule id="Q9YGC1-1"/>
    <property type="nucleotide sequence ID" value="NM_204908.1"/>
</dbReference>
<dbReference type="SMR" id="Q9YGC1"/>
<dbReference type="BioGRID" id="676007">
    <property type="interactions" value="2"/>
</dbReference>
<dbReference type="FunCoup" id="Q9YGC1">
    <property type="interactions" value="139"/>
</dbReference>
<dbReference type="IntAct" id="Q9YGC1">
    <property type="interactions" value="1"/>
</dbReference>
<dbReference type="MINT" id="Q9YGC1"/>
<dbReference type="STRING" id="9031.ENSGALP00000070495"/>
<dbReference type="GlyGen" id="Q9YGC1">
    <property type="glycosylation" value="2 sites"/>
</dbReference>
<dbReference type="iPTMnet" id="Q9YGC1"/>
<dbReference type="PaxDb" id="9031-ENSGALP00000038883"/>
<dbReference type="GeneID" id="395733"/>
<dbReference type="KEGG" id="gga:395733"/>
<dbReference type="CTD" id="284948"/>
<dbReference type="VEuPathDB" id="HostDB:geneid_395733"/>
<dbReference type="eggNOG" id="ENOG502QUXR">
    <property type="taxonomic scope" value="Eukaryota"/>
</dbReference>
<dbReference type="HOGENOM" id="CLU_043673_0_0_1"/>
<dbReference type="InParanoid" id="Q9YGC1"/>
<dbReference type="OrthoDB" id="10044490at2759"/>
<dbReference type="PhylomeDB" id="Q9YGC1"/>
<dbReference type="TreeFam" id="TF326567"/>
<dbReference type="Reactome" id="R-GGA-983695">
    <property type="pathway name" value="Antigen activates B Cell Receptor (BCR) leading to generation of second messengers"/>
</dbReference>
<dbReference type="PRO" id="PR:Q9YGC1"/>
<dbReference type="Proteomes" id="UP000000539">
    <property type="component" value="Chromosome 6"/>
</dbReference>
<dbReference type="Bgee" id="ENSGALG00000006973">
    <property type="expression patterns" value="Expressed in spleen and 11 other cell types or tissues"/>
</dbReference>
<dbReference type="GO" id="GO:0005737">
    <property type="term" value="C:cytoplasm"/>
    <property type="evidence" value="ECO:0000318"/>
    <property type="project" value="GO_Central"/>
</dbReference>
<dbReference type="GO" id="GO:0005829">
    <property type="term" value="C:cytosol"/>
    <property type="evidence" value="ECO:0000304"/>
    <property type="project" value="Reactome"/>
</dbReference>
<dbReference type="GO" id="GO:0005886">
    <property type="term" value="C:plasma membrane"/>
    <property type="evidence" value="ECO:0007669"/>
    <property type="project" value="UniProtKB-SubCell"/>
</dbReference>
<dbReference type="GO" id="GO:0035473">
    <property type="term" value="F:lipase binding"/>
    <property type="evidence" value="ECO:0000353"/>
    <property type="project" value="ARUK-UCL"/>
</dbReference>
<dbReference type="GO" id="GO:0030183">
    <property type="term" value="P:B cell differentiation"/>
    <property type="evidence" value="ECO:0000304"/>
    <property type="project" value="AgBase"/>
</dbReference>
<dbReference type="GO" id="GO:0050853">
    <property type="term" value="P:B cell receptor signaling pathway"/>
    <property type="evidence" value="ECO:0000315"/>
    <property type="project" value="AgBase"/>
</dbReference>
<dbReference type="GO" id="GO:0007169">
    <property type="term" value="P:cell surface receptor protein tyrosine kinase signaling pathway"/>
    <property type="evidence" value="ECO:0000318"/>
    <property type="project" value="GO_Central"/>
</dbReference>
<dbReference type="GO" id="GO:0035556">
    <property type="term" value="P:intracellular signal transduction"/>
    <property type="evidence" value="ECO:0000318"/>
    <property type="project" value="GO_Central"/>
</dbReference>
<dbReference type="GO" id="GO:0051726">
    <property type="term" value="P:regulation of cell cycle"/>
    <property type="evidence" value="ECO:0000304"/>
    <property type="project" value="AgBase"/>
</dbReference>
<dbReference type="CDD" id="cd09929">
    <property type="entry name" value="SH2_BLNK_SLP-76"/>
    <property type="match status" value="1"/>
</dbReference>
<dbReference type="FunFam" id="3.30.505.10:FF:000016">
    <property type="entry name" value="B-cell linker protein isoform 2"/>
    <property type="match status" value="1"/>
</dbReference>
<dbReference type="Gene3D" id="3.30.505.10">
    <property type="entry name" value="SH2 domain"/>
    <property type="match status" value="1"/>
</dbReference>
<dbReference type="InterPro" id="IPR051751">
    <property type="entry name" value="Immunoreceptor_sig_adapters"/>
</dbReference>
<dbReference type="InterPro" id="IPR000980">
    <property type="entry name" value="SH2"/>
</dbReference>
<dbReference type="InterPro" id="IPR036860">
    <property type="entry name" value="SH2_dom_sf"/>
</dbReference>
<dbReference type="PANTHER" id="PTHR14098:SF3">
    <property type="entry name" value="B-CELL LINKER PROTEIN"/>
    <property type="match status" value="1"/>
</dbReference>
<dbReference type="PANTHER" id="PTHR14098">
    <property type="entry name" value="SH2 DOMAIN CONTAINING PROTEIN"/>
    <property type="match status" value="1"/>
</dbReference>
<dbReference type="Pfam" id="PF00017">
    <property type="entry name" value="SH2"/>
    <property type="match status" value="1"/>
</dbReference>
<dbReference type="SMART" id="SM00252">
    <property type="entry name" value="SH2"/>
    <property type="match status" value="1"/>
</dbReference>
<dbReference type="SUPFAM" id="SSF55550">
    <property type="entry name" value="SH2 domain"/>
    <property type="match status" value="1"/>
</dbReference>
<dbReference type="PROSITE" id="PS50001">
    <property type="entry name" value="SH2"/>
    <property type="match status" value="1"/>
</dbReference>
<feature type="chain" id="PRO_0000064939" description="B-cell linker protein">
    <location>
        <begin position="1"/>
        <end position="552"/>
    </location>
</feature>
<feature type="domain" description="SH2" evidence="2">
    <location>
        <begin position="442"/>
        <end position="549"/>
    </location>
</feature>
<feature type="region of interest" description="Disordered" evidence="3">
    <location>
        <begin position="50"/>
        <end position="431"/>
    </location>
</feature>
<feature type="compositionally biased region" description="Basic and acidic residues" evidence="3">
    <location>
        <begin position="67"/>
        <end position="76"/>
    </location>
</feature>
<feature type="compositionally biased region" description="Acidic residues" evidence="3">
    <location>
        <begin position="77"/>
        <end position="93"/>
    </location>
</feature>
<feature type="compositionally biased region" description="Acidic residues" evidence="3">
    <location>
        <begin position="188"/>
        <end position="205"/>
    </location>
</feature>
<feature type="compositionally biased region" description="Basic and acidic residues" evidence="3">
    <location>
        <begin position="277"/>
        <end position="295"/>
    </location>
</feature>
<feature type="compositionally biased region" description="Basic and acidic residues" evidence="3">
    <location>
        <begin position="309"/>
        <end position="322"/>
    </location>
</feature>
<feature type="compositionally biased region" description="Basic and acidic residues" evidence="3">
    <location>
        <begin position="368"/>
        <end position="382"/>
    </location>
</feature>
<feature type="modified residue" description="Phosphotyrosine; by SYK" evidence="5">
    <location>
        <position position="91"/>
    </location>
</feature>
<feature type="modified residue" description="Phosphotyrosine; by SYK" evidence="5">
    <location>
        <position position="103"/>
    </location>
</feature>
<feature type="modified residue" description="Phosphotyrosine; by SYK" evidence="5">
    <location>
        <position position="115"/>
    </location>
</feature>
<feature type="modified residue" description="Phosphotyrosine; by SYK" evidence="5">
    <location>
        <position position="194"/>
    </location>
</feature>
<feature type="modified residue" description="Phosphotyrosine; by SYK" evidence="5">
    <location>
        <position position="205"/>
    </location>
</feature>
<feature type="modified residue" description="Phosphotyrosine; by SYK" evidence="5">
    <location>
        <position position="249"/>
    </location>
</feature>
<feature type="splice variant" id="VSP_016179" description="In isoform 2." evidence="9">
    <location>
        <begin position="40"/>
        <end position="58"/>
    </location>
</feature>
<feature type="mutagenesis site" description="Significant phosphorylation reduction; when associated with F-103; F-115; F-194 and F-205. Loss of phosphorylation; when associated with F-103; F-115; F-194; F-205 and F-249." evidence="5">
    <original>Y</original>
    <variation>F</variation>
    <location>
        <position position="91"/>
    </location>
</feature>
<feature type="mutagenesis site" description="Significant reduction of Ca(2+) mobilization; when associated with F-194. Loss of Ca(2+) mobilization; when associated with F-194 and F-205. Significant phosphorylation reduction; when associated with F-91; F-115; F-194 and F-205. Loss of phosphorylation; when associated with F-91; F-115; F-194; F-205 and F-249." evidence="5">
    <original>Y</original>
    <variation>F</variation>
    <location>
        <position position="103"/>
    </location>
</feature>
<feature type="mutagenesis site" description="Significant phosphorylation reduction; when associated with F-91; F-103; F-194 and F-205. Loss of phosphorylation; when associated with F-91; F-103; F-194; F-205 and F-249." evidence="5">
    <original>Y</original>
    <variation>F</variation>
    <location>
        <position position="115"/>
    </location>
</feature>
<feature type="mutagenesis site" description="Reduction in Ca(2+) mobilization. Significant reduction of Ca(2+) mobilization; when associated with F-103. Loss of Ca(2+) mobilization; when associated with F-103 and F-205. Significant phosphorylation reduction; when associated with F-91; F-103; F-115 and F-205. Loss of phosphorylation; when associated with F-91; F-103; F-115; F-205 and F-249." evidence="5">
    <original>Y</original>
    <variation>F</variation>
    <location>
        <position position="194"/>
    </location>
</feature>
<feature type="mutagenesis site" description="Loss of Ca(2+) mobilization; when associated with F-194 and F-205. Significant phosphorylation reduction; when associated with F-91; F-103; F-115 and F-194. Loss of phosphorylation; when associated with F-91; F-103; F-115; F-194 and F-249." evidence="5">
    <original>Y</original>
    <variation>F</variation>
    <location>
        <position position="205"/>
    </location>
</feature>
<feature type="mutagenesis site" description="Loss of phosphorylation; when associated with F-91; F-103; F-115; F-194 and F-205." evidence="5">
    <original>Y</original>
    <variation>F</variation>
    <location>
        <position position="249"/>
    </location>
</feature>
<feature type="mutagenesis site" description="Strongly reduced tyrosine phosphorylation. Strongly reduced activation of NFAT." evidence="7">
    <original>R</original>
    <variation>L</variation>
    <location>
        <position position="468"/>
    </location>
</feature>
<reference key="1">
    <citation type="journal article" date="1998" name="J. Immunol.">
        <title>BASH, a novel signaling molecule preferentially expressed in B cells of the bursa of Fabricius.</title>
        <authorList>
            <person name="Goitsuka R."/>
            <person name="Fujimura Y."/>
            <person name="Mamada H."/>
            <person name="Umeda A."/>
            <person name="Morimura T."/>
            <person name="Uetsuka K."/>
            <person name="Doi K."/>
            <person name="Tsuji S."/>
            <person name="Kitamura D."/>
        </authorList>
    </citation>
    <scope>NUCLEOTIDE SEQUENCE [MRNA] (ISOFORMS 1 AND 2)</scope>
    <scope>FUNCTION IN BCR-MEDIATED SIGNAL TRANSDUCTION</scope>
    <scope>ALTERNATIVE SPLICING</scope>
    <scope>PHOSPHORYLATION BY SYK AND LYN</scope>
</reference>
<reference key="2">
    <citation type="journal article" date="1999" name="Immunity">
        <title>BLNK required for coupling Syk to PLC gamma 2 and Rac1-JNK in B cells.</title>
        <authorList>
            <person name="Ishiai M."/>
            <person name="Kurosaki M."/>
            <person name="Pappu R."/>
            <person name="Okawa K."/>
            <person name="Ronko I."/>
            <person name="Fu C."/>
            <person name="Shibata M."/>
            <person name="Iwamatsu A."/>
            <person name="Chan A.C."/>
            <person name="Kurosaki T."/>
        </authorList>
    </citation>
    <scope>NUCLEOTIDE SEQUENCE [MRNA] (ISOFORM 1)</scope>
    <scope>FUNCTION IN REGULATING THE RAC1-JNK PATHWAY</scope>
</reference>
<reference key="3">
    <citation type="journal article" date="2002" name="EMBO J.">
        <title>BLNK: molecular scaffolding through 'cis'-mediated organization of signaling proteins.</title>
        <authorList>
            <person name="Chiu C.W."/>
            <person name="Dalton M."/>
            <person name="Ishiai M."/>
            <person name="Kurosaki T."/>
            <person name="Chan A.C."/>
        </authorList>
    </citation>
    <scope>PHOSPHORYLATION AT TYR-91; TYR-103; TYR-115; TYR-194; TYR-205 AND TYR-249 BY SYK</scope>
    <scope>MUTAGENESIS OF TYR-91; TYR-103; TYR-115; TYR-194; TYR-205 AND TYR-249</scope>
</reference>
<reference key="4">
    <citation type="journal article" date="2006" name="Blood">
        <title>Human SLP-65 isoforms contribute differently to activation and apoptosis of B lymphocytes.</title>
        <authorList>
            <person name="Grabbe A."/>
            <person name="Wienands J."/>
        </authorList>
    </citation>
    <scope>FUNCTION</scope>
    <scope>TYROSINE PHOSPHORYLATION</scope>
    <scope>INTERACTION WITH GRB2; PLCG2 AND VAV3</scope>
</reference>
<reference key="5">
    <citation type="journal article" date="2007" name="J. Biol. Chem.">
        <title>SLP-65 signal transduction requires Src homology 2 domain-mediated membrane anchoring and a kinase-independent adaptor function of Syk.</title>
        <authorList>
            <person name="Abudula A."/>
            <person name="Grabbe A."/>
            <person name="Brechmann M."/>
            <person name="Polaschegg C."/>
            <person name="Herrmann N."/>
            <person name="Goldbeck I."/>
            <person name="Dittmann K."/>
            <person name="Wienands J."/>
        </authorList>
    </citation>
    <scope>FUNCTION</scope>
    <scope>TYROSINE PHOSPHORYLATION</scope>
    <scope>MUTAGENESIS OF ARG-468</scope>
    <scope>SUBCELLULAR LOCATION</scope>
</reference>
<accession>Q9YGC1</accession>
<keyword id="KW-0025">Alternative splicing</keyword>
<keyword id="KW-0075">B-cell activation</keyword>
<keyword id="KW-1003">Cell membrane</keyword>
<keyword id="KW-0963">Cytoplasm</keyword>
<keyword id="KW-0472">Membrane</keyword>
<keyword id="KW-0597">Phosphoprotein</keyword>
<keyword id="KW-1185">Reference proteome</keyword>
<keyword id="KW-0727">SH2 domain</keyword>
<protein>
    <recommendedName>
        <fullName>B-cell linker protein</fullName>
    </recommendedName>
    <alternativeName>
        <fullName>B-cell adapter SH2 domain-containing protein</fullName>
    </alternativeName>
    <alternativeName>
        <fullName>Cytoplasmic adapter protein</fullName>
    </alternativeName>
    <alternativeName>
        <fullName>Src homology 2 domain-containing leukocyte protein of 65 kDa</fullName>
        <shortName>SLP-65</shortName>
    </alternativeName>
</protein>
<organism>
    <name type="scientific">Gallus gallus</name>
    <name type="common">Chicken</name>
    <dbReference type="NCBI Taxonomy" id="9031"/>
    <lineage>
        <taxon>Eukaryota</taxon>
        <taxon>Metazoa</taxon>
        <taxon>Chordata</taxon>
        <taxon>Craniata</taxon>
        <taxon>Vertebrata</taxon>
        <taxon>Euteleostomi</taxon>
        <taxon>Archelosauria</taxon>
        <taxon>Archosauria</taxon>
        <taxon>Dinosauria</taxon>
        <taxon>Saurischia</taxon>
        <taxon>Theropoda</taxon>
        <taxon>Coelurosauria</taxon>
        <taxon>Aves</taxon>
        <taxon>Neognathae</taxon>
        <taxon>Galloanserae</taxon>
        <taxon>Galliformes</taxon>
        <taxon>Phasianidae</taxon>
        <taxon>Phasianinae</taxon>
        <taxon>Gallus</taxon>
    </lineage>
</organism>
<evidence type="ECO:0000250" key="1"/>
<evidence type="ECO:0000255" key="2">
    <source>
        <dbReference type="PROSITE-ProRule" id="PRU00191"/>
    </source>
</evidence>
<evidence type="ECO:0000256" key="3">
    <source>
        <dbReference type="SAM" id="MobiDB-lite"/>
    </source>
</evidence>
<evidence type="ECO:0000269" key="4">
    <source>
    </source>
</evidence>
<evidence type="ECO:0000269" key="5">
    <source>
    </source>
</evidence>
<evidence type="ECO:0000269" key="6">
    <source>
    </source>
</evidence>
<evidence type="ECO:0000269" key="7">
    <source>
    </source>
</evidence>
<evidence type="ECO:0000269" key="8">
    <source>
    </source>
</evidence>
<evidence type="ECO:0000303" key="9">
    <source>
    </source>
</evidence>
<name>BLNK_CHICK</name>
<comment type="function">
    <text evidence="1 4 6 7 8">Functions as a central linker protein, downstream of the B-cell receptor (BCR), bridging the SYK kinase to a multitude of signaling pathways and regulating biological outcomes of B-cell function and development. Plays a role in the activation of ERK/EPHB2, MAP kinase p38 and JNK. Modulates AP1 activation. Important for the activation of NF-kappa-B and NFAT. Plays an important role in BCR-mediated PLCG1 and PLCG2 activation and Ca(2+) mobilization and is required for trafficking of the BCR to late endosomes. However, does not seem to be required for pre-BCR-mediated activation of MAP kinase and phosphatidyl-inositol 3 (PI3) kinase signaling. May be required for the RAC1-JNK pathway. Plays a critical role in orchestrating the pro-B cell to pre-B cell transition (By similarity). Plays a critical role in B-cell development in the bursa. Plays an important role in BCR-induced apoptosis.</text>
</comment>
<comment type="subunit">
    <text evidence="1 6">Associates with PLCG1, VAV1 and NCK1 in a B-cell antigen receptor-dependent fashion. Interacts through its SH2 domain with CD79A (By similarity). Interacts with VAV3, PLCG2 and GRB2.</text>
</comment>
<comment type="subcellular location">
    <subcellularLocation>
        <location evidence="7">Cytoplasm</location>
    </subcellularLocation>
    <subcellularLocation>
        <location evidence="7">Cell membrane</location>
    </subcellularLocation>
    <text>BCR activation results in the translocation to membrane fraction.</text>
</comment>
<comment type="alternative products">
    <event type="alternative splicing"/>
    <isoform>
        <id>Q9YGC1-1</id>
        <name>1</name>
        <sequence type="displayed"/>
    </isoform>
    <isoform>
        <id>Q9YGC1-2</id>
        <name>2</name>
        <sequence type="described" ref="VSP_016179"/>
    </isoform>
</comment>
<comment type="tissue specificity">
    <text>Highly expressed in the bursa, very low expression in ovary and spleen. Expression was variable among B-cell lines. Highly expressed in immature B-cell lines such as DT40 and CL18, low expression was seen in relatively mature B-cell lines, such as 293B9 and 249L4. No expression was seen in T-cell lines.</text>
</comment>
<comment type="PTM">
    <text evidence="1 5 8">Following BCR activation, phosphorylated on tyrosine residues by SYK and LYN. When phosphorylated, serves as a scaffold to assemble downstream targets of antigen activation, including PLCG1, VAV1, GRB2 and NCK1. Phosphorylation is required for both Ca(2+) and MAPK signaling pathways (By similarity). Phosphorylation of Tyr-103, Tyr-194 and Tyr-205 facilitates PLCG1 binding. Phosphorylation of Tyr-115 facilitates BTK binding. Phosphorylation of Tyr-91 facilitates VAV1 and NCK1 binding.</text>
</comment>